<organism>
    <name type="scientific">Mycobacterium avium (strain 104)</name>
    <dbReference type="NCBI Taxonomy" id="243243"/>
    <lineage>
        <taxon>Bacteria</taxon>
        <taxon>Bacillati</taxon>
        <taxon>Actinomycetota</taxon>
        <taxon>Actinomycetes</taxon>
        <taxon>Mycobacteriales</taxon>
        <taxon>Mycobacteriaceae</taxon>
        <taxon>Mycobacterium</taxon>
        <taxon>Mycobacterium avium complex (MAC)</taxon>
    </lineage>
</organism>
<gene>
    <name evidence="1" type="primary">rpsI</name>
    <name type="ordered locus">MAV_4385</name>
</gene>
<reference key="1">
    <citation type="submission" date="2006-10" db="EMBL/GenBank/DDBJ databases">
        <authorList>
            <person name="Fleischmann R.D."/>
            <person name="Dodson R.J."/>
            <person name="Haft D.H."/>
            <person name="Merkel J.S."/>
            <person name="Nelson W.C."/>
            <person name="Fraser C.M."/>
        </authorList>
    </citation>
    <scope>NUCLEOTIDE SEQUENCE [LARGE SCALE GENOMIC DNA]</scope>
    <source>
        <strain>104</strain>
    </source>
</reference>
<accession>A0QKT2</accession>
<sequence>MTETTEALENPDNPDAETAAAEVTEAPVEAVPAESYVFERPIQTVGRRKEAVVRVRLVPGTGKFNLNGRTLEGYFPNKVHQQLIKAPLVTVDRVDSFDIYAHLHGGGPSGQAGALRLGIARALILASPDDRPALKKAGFLTRDPRATERKKYGLKKARKAPQYSKR</sequence>
<comment type="similarity">
    <text evidence="1">Belongs to the universal ribosomal protein uS9 family.</text>
</comment>
<evidence type="ECO:0000255" key="1">
    <source>
        <dbReference type="HAMAP-Rule" id="MF_00532"/>
    </source>
</evidence>
<evidence type="ECO:0000256" key="2">
    <source>
        <dbReference type="SAM" id="MobiDB-lite"/>
    </source>
</evidence>
<evidence type="ECO:0000305" key="3"/>
<feature type="chain" id="PRO_1000051255" description="Small ribosomal subunit protein uS9">
    <location>
        <begin position="1"/>
        <end position="166"/>
    </location>
</feature>
<feature type="region of interest" description="Disordered" evidence="2">
    <location>
        <begin position="135"/>
        <end position="166"/>
    </location>
</feature>
<feature type="compositionally biased region" description="Basic and acidic residues" evidence="2">
    <location>
        <begin position="142"/>
        <end position="151"/>
    </location>
</feature>
<feature type="compositionally biased region" description="Basic residues" evidence="2">
    <location>
        <begin position="152"/>
        <end position="166"/>
    </location>
</feature>
<name>RS9_MYCA1</name>
<protein>
    <recommendedName>
        <fullName evidence="1">Small ribosomal subunit protein uS9</fullName>
    </recommendedName>
    <alternativeName>
        <fullName evidence="3">30S ribosomal protein S9</fullName>
    </alternativeName>
</protein>
<proteinExistence type="inferred from homology"/>
<dbReference type="EMBL" id="CP000479">
    <property type="protein sequence ID" value="ABK68528.1"/>
    <property type="molecule type" value="Genomic_DNA"/>
</dbReference>
<dbReference type="SMR" id="A0QKT2"/>
<dbReference type="KEGG" id="mav:MAV_4385"/>
<dbReference type="HOGENOM" id="CLU_046483_2_0_11"/>
<dbReference type="Proteomes" id="UP000001574">
    <property type="component" value="Chromosome"/>
</dbReference>
<dbReference type="GO" id="GO:0005737">
    <property type="term" value="C:cytoplasm"/>
    <property type="evidence" value="ECO:0007669"/>
    <property type="project" value="UniProtKB-ARBA"/>
</dbReference>
<dbReference type="GO" id="GO:0015935">
    <property type="term" value="C:small ribosomal subunit"/>
    <property type="evidence" value="ECO:0007669"/>
    <property type="project" value="TreeGrafter"/>
</dbReference>
<dbReference type="GO" id="GO:0003723">
    <property type="term" value="F:RNA binding"/>
    <property type="evidence" value="ECO:0007669"/>
    <property type="project" value="TreeGrafter"/>
</dbReference>
<dbReference type="GO" id="GO:0003735">
    <property type="term" value="F:structural constituent of ribosome"/>
    <property type="evidence" value="ECO:0007669"/>
    <property type="project" value="InterPro"/>
</dbReference>
<dbReference type="GO" id="GO:0006412">
    <property type="term" value="P:translation"/>
    <property type="evidence" value="ECO:0007669"/>
    <property type="project" value="UniProtKB-UniRule"/>
</dbReference>
<dbReference type="FunFam" id="3.30.230.10:FF:000001">
    <property type="entry name" value="30S ribosomal protein S9"/>
    <property type="match status" value="1"/>
</dbReference>
<dbReference type="Gene3D" id="3.30.230.10">
    <property type="match status" value="1"/>
</dbReference>
<dbReference type="HAMAP" id="MF_00532_B">
    <property type="entry name" value="Ribosomal_uS9_B"/>
    <property type="match status" value="1"/>
</dbReference>
<dbReference type="InterPro" id="IPR020568">
    <property type="entry name" value="Ribosomal_Su5_D2-typ_SF"/>
</dbReference>
<dbReference type="InterPro" id="IPR000754">
    <property type="entry name" value="Ribosomal_uS9"/>
</dbReference>
<dbReference type="InterPro" id="IPR023035">
    <property type="entry name" value="Ribosomal_uS9_bac/plastid"/>
</dbReference>
<dbReference type="InterPro" id="IPR020574">
    <property type="entry name" value="Ribosomal_uS9_CS"/>
</dbReference>
<dbReference type="InterPro" id="IPR014721">
    <property type="entry name" value="Ribsml_uS5_D2-typ_fold_subgr"/>
</dbReference>
<dbReference type="NCBIfam" id="NF001099">
    <property type="entry name" value="PRK00132.1"/>
    <property type="match status" value="1"/>
</dbReference>
<dbReference type="PANTHER" id="PTHR21569">
    <property type="entry name" value="RIBOSOMAL PROTEIN S9"/>
    <property type="match status" value="1"/>
</dbReference>
<dbReference type="PANTHER" id="PTHR21569:SF1">
    <property type="entry name" value="SMALL RIBOSOMAL SUBUNIT PROTEIN US9M"/>
    <property type="match status" value="1"/>
</dbReference>
<dbReference type="Pfam" id="PF00380">
    <property type="entry name" value="Ribosomal_S9"/>
    <property type="match status" value="1"/>
</dbReference>
<dbReference type="SUPFAM" id="SSF54211">
    <property type="entry name" value="Ribosomal protein S5 domain 2-like"/>
    <property type="match status" value="1"/>
</dbReference>
<dbReference type="PROSITE" id="PS00360">
    <property type="entry name" value="RIBOSOMAL_S9"/>
    <property type="match status" value="1"/>
</dbReference>
<keyword id="KW-0687">Ribonucleoprotein</keyword>
<keyword id="KW-0689">Ribosomal protein</keyword>